<accession>Q83PS4</accession>
<accession>Q7BYY4</accession>
<protein>
    <recommendedName>
        <fullName evidence="1">C4-dicarboxylate transport protein</fullName>
    </recommendedName>
</protein>
<comment type="function">
    <text evidence="1">Responsible for the transport of dicarboxylates such as succinate, fumarate, and malate from the periplasm across the membrane.</text>
</comment>
<comment type="subcellular location">
    <subcellularLocation>
        <location evidence="1">Cell inner membrane</location>
        <topology evidence="1">Multi-pass membrane protein</topology>
    </subcellularLocation>
</comment>
<comment type="similarity">
    <text evidence="1">Belongs to the dicarboxylate/amino acid:cation symporter (DAACS) (TC 2.A.23) family.</text>
</comment>
<name>DCTA_SHIFL</name>
<proteinExistence type="inferred from homology"/>
<feature type="chain" id="PRO_1000067468" description="C4-dicarboxylate transport protein">
    <location>
        <begin position="1"/>
        <end position="428"/>
    </location>
</feature>
<feature type="transmembrane region" description="Helical" evidence="1">
    <location>
        <begin position="8"/>
        <end position="28"/>
    </location>
</feature>
<feature type="transmembrane region" description="Helical" evidence="1">
    <location>
        <begin position="44"/>
        <end position="64"/>
    </location>
</feature>
<feature type="transmembrane region" description="Helical" evidence="1">
    <location>
        <begin position="76"/>
        <end position="96"/>
    </location>
</feature>
<feature type="transmembrane region" description="Helical" evidence="1">
    <location>
        <begin position="142"/>
        <end position="162"/>
    </location>
</feature>
<feature type="transmembrane region" description="Helical" evidence="1">
    <location>
        <begin position="184"/>
        <end position="206"/>
    </location>
</feature>
<feature type="transmembrane region" description="Helical" evidence="1">
    <location>
        <begin position="222"/>
        <end position="242"/>
    </location>
</feature>
<feature type="transmembrane region" description="Helical" evidence="1">
    <location>
        <begin position="326"/>
        <end position="346"/>
    </location>
</feature>
<feature type="transmembrane region" description="Helical" evidence="1">
    <location>
        <begin position="352"/>
        <end position="372"/>
    </location>
</feature>
<evidence type="ECO:0000255" key="1">
    <source>
        <dbReference type="HAMAP-Rule" id="MF_01300"/>
    </source>
</evidence>
<reference key="1">
    <citation type="journal article" date="2002" name="Nucleic Acids Res.">
        <title>Genome sequence of Shigella flexneri 2a: insights into pathogenicity through comparison with genomes of Escherichia coli K12 and O157.</title>
        <authorList>
            <person name="Jin Q."/>
            <person name="Yuan Z."/>
            <person name="Xu J."/>
            <person name="Wang Y."/>
            <person name="Shen Y."/>
            <person name="Lu W."/>
            <person name="Wang J."/>
            <person name="Liu H."/>
            <person name="Yang J."/>
            <person name="Yang F."/>
            <person name="Zhang X."/>
            <person name="Zhang J."/>
            <person name="Yang G."/>
            <person name="Wu H."/>
            <person name="Qu D."/>
            <person name="Dong J."/>
            <person name="Sun L."/>
            <person name="Xue Y."/>
            <person name="Zhao A."/>
            <person name="Gao Y."/>
            <person name="Zhu J."/>
            <person name="Kan B."/>
            <person name="Ding K."/>
            <person name="Chen S."/>
            <person name="Cheng H."/>
            <person name="Yao Z."/>
            <person name="He B."/>
            <person name="Chen R."/>
            <person name="Ma D."/>
            <person name="Qiang B."/>
            <person name="Wen Y."/>
            <person name="Hou Y."/>
            <person name="Yu J."/>
        </authorList>
    </citation>
    <scope>NUCLEOTIDE SEQUENCE [LARGE SCALE GENOMIC DNA]</scope>
    <source>
        <strain>301 / Serotype 2a</strain>
    </source>
</reference>
<reference key="2">
    <citation type="journal article" date="2003" name="Infect. Immun.">
        <title>Complete genome sequence and comparative genomics of Shigella flexneri serotype 2a strain 2457T.</title>
        <authorList>
            <person name="Wei J."/>
            <person name="Goldberg M.B."/>
            <person name="Burland V."/>
            <person name="Venkatesan M.M."/>
            <person name="Deng W."/>
            <person name="Fournier G."/>
            <person name="Mayhew G.F."/>
            <person name="Plunkett G. III"/>
            <person name="Rose D.J."/>
            <person name="Darling A."/>
            <person name="Mau B."/>
            <person name="Perna N.T."/>
            <person name="Payne S.M."/>
            <person name="Runyen-Janecky L.J."/>
            <person name="Zhou S."/>
            <person name="Schwartz D.C."/>
            <person name="Blattner F.R."/>
        </authorList>
    </citation>
    <scope>NUCLEOTIDE SEQUENCE [LARGE SCALE GENOMIC DNA]</scope>
    <source>
        <strain>ATCC 700930 / 2457T / Serotype 2a</strain>
    </source>
</reference>
<sequence length="428" mass="45402">MKTSLFKSLYFQVLTAIAIGILLGHFYPEIGEQMKPLGDGFVKLIKMIIAPVIFCTVVTGIAGMESMKAVGRTGAVALLYFEIVSTIALIIGLIIVNVVQPGAGMNVDPATLDAKAVAVYADQAKDQGIVAFIMDVIPASVIGAFASGNILQVLLFAVLFGFALHRLGSKGQLIFNVIESFSQVIFGIINMIMRLAPIGALGAMAFTIGKYGVGTLVQLGQLIICFYITCILFVVLVLGSIAKATGFSIFKFIRYIREELLIVLGTSSSESALPRMLDKMEKLGCRKSVVGLVIPTGYSFNLDGTSIYLTMAAVFIAQATNSQMDIVHQITLLIVLLLSSKGAAGVTGSGFIVLAATLSAVGHLPVAGLALILGIDRFMSEARALTNLVGNGVATIVVAKWVKELDHKKLDDVLNNRAPDGKTHELSS</sequence>
<gene>
    <name evidence="1" type="primary">dctA</name>
    <name type="ordered locus">SF3560</name>
    <name type="ordered locus">S4207</name>
</gene>
<organism>
    <name type="scientific">Shigella flexneri</name>
    <dbReference type="NCBI Taxonomy" id="623"/>
    <lineage>
        <taxon>Bacteria</taxon>
        <taxon>Pseudomonadati</taxon>
        <taxon>Pseudomonadota</taxon>
        <taxon>Gammaproteobacteria</taxon>
        <taxon>Enterobacterales</taxon>
        <taxon>Enterobacteriaceae</taxon>
        <taxon>Shigella</taxon>
    </lineage>
</organism>
<dbReference type="EMBL" id="AE005674">
    <property type="protein sequence ID" value="AAN45013.1"/>
    <property type="molecule type" value="Genomic_DNA"/>
</dbReference>
<dbReference type="EMBL" id="AE014073">
    <property type="protein sequence ID" value="AAP19172.1"/>
    <property type="molecule type" value="Genomic_DNA"/>
</dbReference>
<dbReference type="RefSeq" id="NP_709306.1">
    <property type="nucleotide sequence ID" value="NC_004337.2"/>
</dbReference>
<dbReference type="RefSeq" id="WP_000858217.1">
    <property type="nucleotide sequence ID" value="NZ_WPGW01000020.1"/>
</dbReference>
<dbReference type="SMR" id="Q83PS4"/>
<dbReference type="STRING" id="198214.SF3560"/>
<dbReference type="PaxDb" id="198214-SF3560"/>
<dbReference type="GeneID" id="1026337"/>
<dbReference type="KEGG" id="sfl:SF3560"/>
<dbReference type="KEGG" id="sfx:S4207"/>
<dbReference type="PATRIC" id="fig|198214.7.peg.4194"/>
<dbReference type="HOGENOM" id="CLU_019375_7_0_6"/>
<dbReference type="Proteomes" id="UP000001006">
    <property type="component" value="Chromosome"/>
</dbReference>
<dbReference type="Proteomes" id="UP000002673">
    <property type="component" value="Chromosome"/>
</dbReference>
<dbReference type="GO" id="GO:0005886">
    <property type="term" value="C:plasma membrane"/>
    <property type="evidence" value="ECO:0007669"/>
    <property type="project" value="UniProtKB-SubCell"/>
</dbReference>
<dbReference type="GO" id="GO:0015138">
    <property type="term" value="F:fumarate transmembrane transporter activity"/>
    <property type="evidence" value="ECO:0007669"/>
    <property type="project" value="TreeGrafter"/>
</dbReference>
<dbReference type="GO" id="GO:0015366">
    <property type="term" value="F:malate:proton symporter activity"/>
    <property type="evidence" value="ECO:0007669"/>
    <property type="project" value="TreeGrafter"/>
</dbReference>
<dbReference type="GO" id="GO:0015141">
    <property type="term" value="F:succinate transmembrane transporter activity"/>
    <property type="evidence" value="ECO:0007669"/>
    <property type="project" value="TreeGrafter"/>
</dbReference>
<dbReference type="GO" id="GO:0070778">
    <property type="term" value="P:L-aspartate transmembrane transport"/>
    <property type="evidence" value="ECO:0007669"/>
    <property type="project" value="TreeGrafter"/>
</dbReference>
<dbReference type="FunFam" id="1.10.3860.10:FF:000001">
    <property type="entry name" value="C4-dicarboxylate transport protein"/>
    <property type="match status" value="1"/>
</dbReference>
<dbReference type="Gene3D" id="1.10.3860.10">
    <property type="entry name" value="Sodium:dicarboxylate symporter"/>
    <property type="match status" value="1"/>
</dbReference>
<dbReference type="HAMAP" id="MF_01300">
    <property type="entry name" value="C4_dicarb_transport"/>
    <property type="match status" value="1"/>
</dbReference>
<dbReference type="InterPro" id="IPR023954">
    <property type="entry name" value="C4_dicarb_transport"/>
</dbReference>
<dbReference type="InterPro" id="IPR001991">
    <property type="entry name" value="Na-dicarboxylate_symporter"/>
</dbReference>
<dbReference type="InterPro" id="IPR018107">
    <property type="entry name" value="Na-dicarboxylate_symporter_CS"/>
</dbReference>
<dbReference type="InterPro" id="IPR036458">
    <property type="entry name" value="Na:dicarbo_symporter_sf"/>
</dbReference>
<dbReference type="NCBIfam" id="NF002461">
    <property type="entry name" value="PRK01663.1"/>
    <property type="match status" value="1"/>
</dbReference>
<dbReference type="NCBIfam" id="NF009587">
    <property type="entry name" value="PRK13027.1"/>
    <property type="match status" value="1"/>
</dbReference>
<dbReference type="PANTHER" id="PTHR42865:SF1">
    <property type="entry name" value="AEROBIC C4-DICARBOXYLATE TRANSPORT PROTEIN"/>
    <property type="match status" value="1"/>
</dbReference>
<dbReference type="PANTHER" id="PTHR42865">
    <property type="entry name" value="PROTON/GLUTAMATE-ASPARTATE SYMPORTER"/>
    <property type="match status" value="1"/>
</dbReference>
<dbReference type="Pfam" id="PF00375">
    <property type="entry name" value="SDF"/>
    <property type="match status" value="1"/>
</dbReference>
<dbReference type="PRINTS" id="PR00173">
    <property type="entry name" value="EDTRNSPORT"/>
</dbReference>
<dbReference type="SUPFAM" id="SSF118215">
    <property type="entry name" value="Proton glutamate symport protein"/>
    <property type="match status" value="1"/>
</dbReference>
<dbReference type="PROSITE" id="PS00713">
    <property type="entry name" value="NA_DICARBOXYL_SYMP_1"/>
    <property type="match status" value="1"/>
</dbReference>
<dbReference type="PROSITE" id="PS00714">
    <property type="entry name" value="NA_DICARBOXYL_SYMP_2"/>
    <property type="match status" value="1"/>
</dbReference>
<keyword id="KW-0997">Cell inner membrane</keyword>
<keyword id="KW-1003">Cell membrane</keyword>
<keyword id="KW-0472">Membrane</keyword>
<keyword id="KW-1185">Reference proteome</keyword>
<keyword id="KW-0769">Symport</keyword>
<keyword id="KW-0812">Transmembrane</keyword>
<keyword id="KW-1133">Transmembrane helix</keyword>
<keyword id="KW-0813">Transport</keyword>